<evidence type="ECO:0000255" key="1"/>
<evidence type="ECO:0000305" key="2"/>
<feature type="chain" id="PRO_0000059186" description="Putative glycosyltransferase CsbB">
    <location>
        <begin position="1"/>
        <end position="329"/>
    </location>
</feature>
<feature type="transmembrane region" description="Helical" evidence="1">
    <location>
        <begin position="231"/>
        <end position="251"/>
    </location>
</feature>
<feature type="transmembrane region" description="Helical" evidence="1">
    <location>
        <begin position="264"/>
        <end position="284"/>
    </location>
</feature>
<comment type="subcellular location">
    <subcellularLocation>
        <location evidence="2">Cell membrane</location>
        <topology evidence="2">Multi-pass membrane protein</topology>
    </subcellularLocation>
</comment>
<comment type="induction">
    <text>Induced by salt addition via sigma-B dependent promoter.</text>
</comment>
<comment type="similarity">
    <text evidence="2">Belongs to the glycosyltransferase 2 family. GtrB subfamily.</text>
</comment>
<protein>
    <recommendedName>
        <fullName>Putative glycosyltransferase CsbB</fullName>
        <ecNumber>2.4.-.-</ecNumber>
    </recommendedName>
</protein>
<organism>
    <name type="scientific">Bacillus subtilis (strain 168)</name>
    <dbReference type="NCBI Taxonomy" id="224308"/>
    <lineage>
        <taxon>Bacteria</taxon>
        <taxon>Bacillati</taxon>
        <taxon>Bacillota</taxon>
        <taxon>Bacilli</taxon>
        <taxon>Bacillales</taxon>
        <taxon>Bacillaceae</taxon>
        <taxon>Bacillus</taxon>
    </lineage>
</organism>
<dbReference type="EC" id="2.4.-.-"/>
<dbReference type="EMBL" id="L77099">
    <property type="protein sequence ID" value="AAB38429.1"/>
    <property type="molecule type" value="Genomic_DNA"/>
</dbReference>
<dbReference type="EMBL" id="D85082">
    <property type="protein sequence ID" value="BAA24480.1"/>
    <property type="molecule type" value="Genomic_DNA"/>
</dbReference>
<dbReference type="EMBL" id="AL009126">
    <property type="protein sequence ID" value="CAB12688.1"/>
    <property type="molecule type" value="Genomic_DNA"/>
</dbReference>
<dbReference type="PIR" id="JC5173">
    <property type="entry name" value="JC5173"/>
</dbReference>
<dbReference type="RefSeq" id="NP_388740.1">
    <property type="nucleotide sequence ID" value="NC_000964.3"/>
</dbReference>
<dbReference type="RefSeq" id="WP_003244113.1">
    <property type="nucleotide sequence ID" value="NZ_OZ025638.1"/>
</dbReference>
<dbReference type="SMR" id="Q45539"/>
<dbReference type="FunCoup" id="Q45539">
    <property type="interactions" value="531"/>
</dbReference>
<dbReference type="STRING" id="224308.BSU08600"/>
<dbReference type="CAZy" id="GT2">
    <property type="family name" value="Glycosyltransferase Family 2"/>
</dbReference>
<dbReference type="PaxDb" id="224308-BSU08600"/>
<dbReference type="EnsemblBacteria" id="CAB12688">
    <property type="protein sequence ID" value="CAB12688"/>
    <property type="gene ID" value="BSU_08600"/>
</dbReference>
<dbReference type="GeneID" id="939717"/>
<dbReference type="KEGG" id="bsu:BSU08600"/>
<dbReference type="PATRIC" id="fig|224308.179.peg.928"/>
<dbReference type="eggNOG" id="COG0463">
    <property type="taxonomic scope" value="Bacteria"/>
</dbReference>
<dbReference type="InParanoid" id="Q45539"/>
<dbReference type="OrthoDB" id="9807778at2"/>
<dbReference type="PhylomeDB" id="Q45539"/>
<dbReference type="BioCyc" id="BSUB:BSU08600-MONOMER"/>
<dbReference type="Proteomes" id="UP000001570">
    <property type="component" value="Chromosome"/>
</dbReference>
<dbReference type="GO" id="GO:0005886">
    <property type="term" value="C:plasma membrane"/>
    <property type="evidence" value="ECO:0000318"/>
    <property type="project" value="GO_Central"/>
</dbReference>
<dbReference type="GO" id="GO:0016757">
    <property type="term" value="F:glycosyltransferase activity"/>
    <property type="evidence" value="ECO:0007669"/>
    <property type="project" value="UniProtKB-KW"/>
</dbReference>
<dbReference type="CDD" id="cd04187">
    <property type="entry name" value="DPM1_like_bac"/>
    <property type="match status" value="1"/>
</dbReference>
<dbReference type="FunFam" id="3.90.550.10:FF:000125">
    <property type="entry name" value="Putative glycosyltransferase CsbB"/>
    <property type="match status" value="1"/>
</dbReference>
<dbReference type="Gene3D" id="3.90.550.10">
    <property type="entry name" value="Spore Coat Polysaccharide Biosynthesis Protein SpsA, Chain A"/>
    <property type="match status" value="1"/>
</dbReference>
<dbReference type="InterPro" id="IPR001173">
    <property type="entry name" value="Glyco_trans_2-like"/>
</dbReference>
<dbReference type="InterPro" id="IPR050256">
    <property type="entry name" value="Glycosyltransferase_2"/>
</dbReference>
<dbReference type="InterPro" id="IPR029044">
    <property type="entry name" value="Nucleotide-diphossugar_trans"/>
</dbReference>
<dbReference type="PANTHER" id="PTHR48090:SF8">
    <property type="entry name" value="GLYCOSYLTRANSFERASE CSBB-RELATED"/>
    <property type="match status" value="1"/>
</dbReference>
<dbReference type="PANTHER" id="PTHR48090">
    <property type="entry name" value="UNDECAPRENYL-PHOSPHATE 4-DEOXY-4-FORMAMIDO-L-ARABINOSE TRANSFERASE-RELATED"/>
    <property type="match status" value="1"/>
</dbReference>
<dbReference type="Pfam" id="PF00535">
    <property type="entry name" value="Glycos_transf_2"/>
    <property type="match status" value="1"/>
</dbReference>
<dbReference type="SUPFAM" id="SSF53448">
    <property type="entry name" value="Nucleotide-diphospho-sugar transferases"/>
    <property type="match status" value="1"/>
</dbReference>
<accession>Q45539</accession>
<name>CSBB_BACSU</name>
<gene>
    <name type="primary">csbB</name>
    <name type="synonym">yfhN</name>
    <name type="ordered locus">BSU08600</name>
</gene>
<proteinExistence type="evidence at transcript level"/>
<reference key="1">
    <citation type="journal article" date="1996" name="Gene">
        <title>Isolation and characterization of csbB, a gene controlled by Bacillus subtilis general stress transcription factor sigma B.</title>
        <authorList>
            <person name="Akbar S."/>
            <person name="Price C.W."/>
        </authorList>
    </citation>
    <scope>NUCLEOTIDE SEQUENCE [GENOMIC DNA]</scope>
    <source>
        <strain>168 / Marburg / ATCC 6051 / DSM 10 / JCM 1465 / NBRC 13719 / NCIMB 3610 / NRRL NRS-744 / VKM B-501</strain>
    </source>
</reference>
<reference key="2">
    <citation type="journal article" date="1996" name="DNA Res.">
        <title>Cloning and sequencing of a 27.8-kb nucleotide sequence of the 79 degrees-81 degrees region of the Bacillus subtilis genome containing the sspE locus.</title>
        <authorList>
            <person name="Yamamoto H."/>
            <person name="Uchiyama S."/>
            <person name="Sekiguchi J."/>
        </authorList>
    </citation>
    <scope>NUCLEOTIDE SEQUENCE [GENOMIC DNA]</scope>
</reference>
<reference key="3">
    <citation type="journal article" date="1997" name="Nature">
        <title>The complete genome sequence of the Gram-positive bacterium Bacillus subtilis.</title>
        <authorList>
            <person name="Kunst F."/>
            <person name="Ogasawara N."/>
            <person name="Moszer I."/>
            <person name="Albertini A.M."/>
            <person name="Alloni G."/>
            <person name="Azevedo V."/>
            <person name="Bertero M.G."/>
            <person name="Bessieres P."/>
            <person name="Bolotin A."/>
            <person name="Borchert S."/>
            <person name="Borriss R."/>
            <person name="Boursier L."/>
            <person name="Brans A."/>
            <person name="Braun M."/>
            <person name="Brignell S.C."/>
            <person name="Bron S."/>
            <person name="Brouillet S."/>
            <person name="Bruschi C.V."/>
            <person name="Caldwell B."/>
            <person name="Capuano V."/>
            <person name="Carter N.M."/>
            <person name="Choi S.-K."/>
            <person name="Codani J.-J."/>
            <person name="Connerton I.F."/>
            <person name="Cummings N.J."/>
            <person name="Daniel R.A."/>
            <person name="Denizot F."/>
            <person name="Devine K.M."/>
            <person name="Duesterhoeft A."/>
            <person name="Ehrlich S.D."/>
            <person name="Emmerson P.T."/>
            <person name="Entian K.-D."/>
            <person name="Errington J."/>
            <person name="Fabret C."/>
            <person name="Ferrari E."/>
            <person name="Foulger D."/>
            <person name="Fritz C."/>
            <person name="Fujita M."/>
            <person name="Fujita Y."/>
            <person name="Fuma S."/>
            <person name="Galizzi A."/>
            <person name="Galleron N."/>
            <person name="Ghim S.-Y."/>
            <person name="Glaser P."/>
            <person name="Goffeau A."/>
            <person name="Golightly E.J."/>
            <person name="Grandi G."/>
            <person name="Guiseppi G."/>
            <person name="Guy B.J."/>
            <person name="Haga K."/>
            <person name="Haiech J."/>
            <person name="Harwood C.R."/>
            <person name="Henaut A."/>
            <person name="Hilbert H."/>
            <person name="Holsappel S."/>
            <person name="Hosono S."/>
            <person name="Hullo M.-F."/>
            <person name="Itaya M."/>
            <person name="Jones L.-M."/>
            <person name="Joris B."/>
            <person name="Karamata D."/>
            <person name="Kasahara Y."/>
            <person name="Klaerr-Blanchard M."/>
            <person name="Klein C."/>
            <person name="Kobayashi Y."/>
            <person name="Koetter P."/>
            <person name="Koningstein G."/>
            <person name="Krogh S."/>
            <person name="Kumano M."/>
            <person name="Kurita K."/>
            <person name="Lapidus A."/>
            <person name="Lardinois S."/>
            <person name="Lauber J."/>
            <person name="Lazarevic V."/>
            <person name="Lee S.-M."/>
            <person name="Levine A."/>
            <person name="Liu H."/>
            <person name="Masuda S."/>
            <person name="Mauel C."/>
            <person name="Medigue C."/>
            <person name="Medina N."/>
            <person name="Mellado R.P."/>
            <person name="Mizuno M."/>
            <person name="Moestl D."/>
            <person name="Nakai S."/>
            <person name="Noback M."/>
            <person name="Noone D."/>
            <person name="O'Reilly M."/>
            <person name="Ogawa K."/>
            <person name="Ogiwara A."/>
            <person name="Oudega B."/>
            <person name="Park S.-H."/>
            <person name="Parro V."/>
            <person name="Pohl T.M."/>
            <person name="Portetelle D."/>
            <person name="Porwollik S."/>
            <person name="Prescott A.M."/>
            <person name="Presecan E."/>
            <person name="Pujic P."/>
            <person name="Purnelle B."/>
            <person name="Rapoport G."/>
            <person name="Rey M."/>
            <person name="Reynolds S."/>
            <person name="Rieger M."/>
            <person name="Rivolta C."/>
            <person name="Rocha E."/>
            <person name="Roche B."/>
            <person name="Rose M."/>
            <person name="Sadaie Y."/>
            <person name="Sato T."/>
            <person name="Scanlan E."/>
            <person name="Schleich S."/>
            <person name="Schroeter R."/>
            <person name="Scoffone F."/>
            <person name="Sekiguchi J."/>
            <person name="Sekowska A."/>
            <person name="Seror S.J."/>
            <person name="Serror P."/>
            <person name="Shin B.-S."/>
            <person name="Soldo B."/>
            <person name="Sorokin A."/>
            <person name="Tacconi E."/>
            <person name="Takagi T."/>
            <person name="Takahashi H."/>
            <person name="Takemaru K."/>
            <person name="Takeuchi M."/>
            <person name="Tamakoshi A."/>
            <person name="Tanaka T."/>
            <person name="Terpstra P."/>
            <person name="Tognoni A."/>
            <person name="Tosato V."/>
            <person name="Uchiyama S."/>
            <person name="Vandenbol M."/>
            <person name="Vannier F."/>
            <person name="Vassarotti A."/>
            <person name="Viari A."/>
            <person name="Wambutt R."/>
            <person name="Wedler E."/>
            <person name="Wedler H."/>
            <person name="Weitzenegger T."/>
            <person name="Winters P."/>
            <person name="Wipat A."/>
            <person name="Yamamoto H."/>
            <person name="Yamane K."/>
            <person name="Yasumoto K."/>
            <person name="Yata K."/>
            <person name="Yoshida K."/>
            <person name="Yoshikawa H.-F."/>
            <person name="Zumstein E."/>
            <person name="Yoshikawa H."/>
            <person name="Danchin A."/>
        </authorList>
    </citation>
    <scope>NUCLEOTIDE SEQUENCE [LARGE SCALE GENOMIC DNA]</scope>
    <source>
        <strain>168</strain>
    </source>
</reference>
<sequence length="329" mass="37729">MKQGLISIIIPSYNEGYNVKLIHESLKKEFKNIHYDYEIFFINDGSVDDTLQQIKDLAATCSRVKYISFSRNFGKEAAILAGFEHVQGEAVIVMDADLQHPTYLLKEFIKGYEEGYDQVIAQRNRKGDSFVRSLLSSMYYKFINKAVEVDLRDGVGDFRLLSRQAVNALLKLSEGNRFSKGLFCWIGFDQKIVFYENVERKNGTSKWSFSSLFNYGMDGVVSFNHKPLRLCFYTGIFILLLSIIYIIATFVKILTNGISVPGYFTIISAVLFLGGVQLLSLGIIGEYIGRIYYETKKRPHYLIKEANIPNKDLPETNELKSMRRLTKMH</sequence>
<keyword id="KW-1003">Cell membrane</keyword>
<keyword id="KW-0328">Glycosyltransferase</keyword>
<keyword id="KW-0472">Membrane</keyword>
<keyword id="KW-1185">Reference proteome</keyword>
<keyword id="KW-0808">Transferase</keyword>
<keyword id="KW-0812">Transmembrane</keyword>
<keyword id="KW-1133">Transmembrane helix</keyword>